<organism>
    <name type="scientific">Francisella tularensis subsp. mediasiatica (strain FSC147)</name>
    <dbReference type="NCBI Taxonomy" id="441952"/>
    <lineage>
        <taxon>Bacteria</taxon>
        <taxon>Pseudomonadati</taxon>
        <taxon>Pseudomonadota</taxon>
        <taxon>Gammaproteobacteria</taxon>
        <taxon>Thiotrichales</taxon>
        <taxon>Francisellaceae</taxon>
        <taxon>Francisella</taxon>
    </lineage>
</organism>
<evidence type="ECO:0000255" key="1">
    <source>
        <dbReference type="HAMAP-Rule" id="MF_00662"/>
    </source>
</evidence>
<protein>
    <recommendedName>
        <fullName evidence="1">Phosphatidylserine decarboxylase proenzyme</fullName>
        <ecNumber evidence="1">4.1.1.65</ecNumber>
    </recommendedName>
    <component>
        <recommendedName>
            <fullName evidence="1">Phosphatidylserine decarboxylase alpha chain</fullName>
        </recommendedName>
    </component>
    <component>
        <recommendedName>
            <fullName evidence="1">Phosphatidylserine decarboxylase beta chain</fullName>
        </recommendedName>
    </component>
</protein>
<comment type="function">
    <text evidence="1">Catalyzes the formation of phosphatidylethanolamine (PtdEtn) from phosphatidylserine (PtdSer).</text>
</comment>
<comment type="catalytic activity">
    <reaction evidence="1">
        <text>a 1,2-diacyl-sn-glycero-3-phospho-L-serine + H(+) = a 1,2-diacyl-sn-glycero-3-phosphoethanolamine + CO2</text>
        <dbReference type="Rhea" id="RHEA:20828"/>
        <dbReference type="ChEBI" id="CHEBI:15378"/>
        <dbReference type="ChEBI" id="CHEBI:16526"/>
        <dbReference type="ChEBI" id="CHEBI:57262"/>
        <dbReference type="ChEBI" id="CHEBI:64612"/>
        <dbReference type="EC" id="4.1.1.65"/>
    </reaction>
</comment>
<comment type="cofactor">
    <cofactor evidence="1">
        <name>pyruvate</name>
        <dbReference type="ChEBI" id="CHEBI:15361"/>
    </cofactor>
    <text evidence="1">Binds 1 pyruvoyl group covalently per subunit.</text>
</comment>
<comment type="pathway">
    <text evidence="1">Phospholipid metabolism; phosphatidylethanolamine biosynthesis; phosphatidylethanolamine from CDP-diacylglycerol: step 2/2.</text>
</comment>
<comment type="subunit">
    <text evidence="1">Heterodimer of a large membrane-associated beta subunit and a small pyruvoyl-containing alpha subunit.</text>
</comment>
<comment type="subcellular location">
    <subcellularLocation>
        <location evidence="1">Cell membrane</location>
        <topology evidence="1">Peripheral membrane protein</topology>
    </subcellularLocation>
</comment>
<comment type="PTM">
    <text evidence="1">Is synthesized initially as an inactive proenzyme. Formation of the active enzyme involves a self-maturation process in which the active site pyruvoyl group is generated from an internal serine residue via an autocatalytic post-translational modification. Two non-identical subunits are generated from the proenzyme in this reaction, and the pyruvate is formed at the N-terminus of the alpha chain, which is derived from the carboxyl end of the proenzyme. The autoendoproteolytic cleavage occurs by a canonical serine protease mechanism, in which the side chain hydroxyl group of the serine supplies its oxygen atom to form the C-terminus of the beta chain, while the remainder of the serine residue undergoes an oxidative deamination to produce ammonia and the pyruvoyl prosthetic group on the alpha chain. During this reaction, the Ser that is part of the protease active site of the proenzyme becomes the pyruvoyl prosthetic group, which constitutes an essential element of the active site of the mature decarboxylase.</text>
</comment>
<comment type="similarity">
    <text evidence="1">Belongs to the phosphatidylserine decarboxylase family. PSD-B subfamily. Prokaryotic type I sub-subfamily.</text>
</comment>
<sequence length="283" mass="32155">MRDNLFIYLQYLLPHTLTSRLVSKLADSENKIIKNHLIRLAIKKFNINLVEAKETDISKYKSFNDFFIRELKDDLRPISNDKNVISSPADGVLSQFGTITDNSLIQAKGKLFSLESLIASSSTTSFTKFATIYLSPKDYHRVHMPIDGKLTKMVYIPGKLFSVNKITTSKVDNLFAKNERLICYFDTIIGEIAVIFVGALLVAGIETVWHGKIAPNYYKDIQTWDYNSAKFNIKFNKGDILGWFNFGSTVIILTSGNNVSFKFEENKNNIKIQVNQDLALITE</sequence>
<gene>
    <name evidence="1" type="primary">psd</name>
    <name type="ordered locus">FTM_0539</name>
</gene>
<name>PSD_FRATM</name>
<accession>B2SFB2</accession>
<feature type="chain" id="PRO_1000131378" description="Phosphatidylserine decarboxylase beta chain" evidence="1">
    <location>
        <begin position="1"/>
        <end position="247"/>
    </location>
</feature>
<feature type="chain" id="PRO_1000131379" description="Phosphatidylserine decarboxylase alpha chain" evidence="1">
    <location>
        <begin position="248"/>
        <end position="283"/>
    </location>
</feature>
<feature type="active site" description="Charge relay system; for autoendoproteolytic cleavage activity" evidence="1">
    <location>
        <position position="90"/>
    </location>
</feature>
<feature type="active site" description="Charge relay system; for autoendoproteolytic cleavage activity" evidence="1">
    <location>
        <position position="143"/>
    </location>
</feature>
<feature type="active site" description="Charge relay system; for autoendoproteolytic cleavage activity" evidence="1">
    <location>
        <position position="248"/>
    </location>
</feature>
<feature type="active site" description="Schiff-base intermediate with substrate; via pyruvic acid; for decarboxylase activity" evidence="1">
    <location>
        <position position="248"/>
    </location>
</feature>
<feature type="site" description="Cleavage (non-hydrolytic); by autocatalysis" evidence="1">
    <location>
        <begin position="247"/>
        <end position="248"/>
    </location>
</feature>
<feature type="modified residue" description="Pyruvic acid (Ser); by autocatalysis" evidence="1">
    <location>
        <position position="248"/>
    </location>
</feature>
<reference key="1">
    <citation type="journal article" date="2009" name="PLoS Pathog.">
        <title>Molecular evolutionary consequences of niche restriction in Francisella tularensis, a facultative intracellular pathogen.</title>
        <authorList>
            <person name="Larsson P."/>
            <person name="Elfsmark D."/>
            <person name="Svensson K."/>
            <person name="Wikstroem P."/>
            <person name="Forsman M."/>
            <person name="Brettin T."/>
            <person name="Keim P."/>
            <person name="Johansson A."/>
        </authorList>
    </citation>
    <scope>NUCLEOTIDE SEQUENCE [LARGE SCALE GENOMIC DNA]</scope>
    <source>
        <strain>FSC147</strain>
    </source>
</reference>
<keyword id="KW-1003">Cell membrane</keyword>
<keyword id="KW-0210">Decarboxylase</keyword>
<keyword id="KW-0444">Lipid biosynthesis</keyword>
<keyword id="KW-0443">Lipid metabolism</keyword>
<keyword id="KW-0456">Lyase</keyword>
<keyword id="KW-0472">Membrane</keyword>
<keyword id="KW-0594">Phospholipid biosynthesis</keyword>
<keyword id="KW-1208">Phospholipid metabolism</keyword>
<keyword id="KW-0670">Pyruvate</keyword>
<keyword id="KW-0865">Zymogen</keyword>
<proteinExistence type="inferred from homology"/>
<dbReference type="EC" id="4.1.1.65" evidence="1"/>
<dbReference type="EMBL" id="CP000915">
    <property type="protein sequence ID" value="ACD30544.1"/>
    <property type="molecule type" value="Genomic_DNA"/>
</dbReference>
<dbReference type="SMR" id="B2SFB2"/>
<dbReference type="KEGG" id="ftm:FTM_0539"/>
<dbReference type="HOGENOM" id="CLU_029061_4_1_6"/>
<dbReference type="UniPathway" id="UPA00558">
    <property type="reaction ID" value="UER00616"/>
</dbReference>
<dbReference type="GO" id="GO:0005886">
    <property type="term" value="C:plasma membrane"/>
    <property type="evidence" value="ECO:0007669"/>
    <property type="project" value="UniProtKB-SubCell"/>
</dbReference>
<dbReference type="GO" id="GO:0004609">
    <property type="term" value="F:phosphatidylserine decarboxylase activity"/>
    <property type="evidence" value="ECO:0007669"/>
    <property type="project" value="UniProtKB-UniRule"/>
</dbReference>
<dbReference type="GO" id="GO:0006646">
    <property type="term" value="P:phosphatidylethanolamine biosynthetic process"/>
    <property type="evidence" value="ECO:0007669"/>
    <property type="project" value="UniProtKB-UniRule"/>
</dbReference>
<dbReference type="HAMAP" id="MF_00662">
    <property type="entry name" value="PS_decarb_PSD_B_type1"/>
    <property type="match status" value="1"/>
</dbReference>
<dbReference type="InterPro" id="IPR003817">
    <property type="entry name" value="PS_Dcarbxylase"/>
</dbReference>
<dbReference type="InterPro" id="IPR033177">
    <property type="entry name" value="PSD-B"/>
</dbReference>
<dbReference type="InterPro" id="IPR033178">
    <property type="entry name" value="PSD_type1_pro"/>
</dbReference>
<dbReference type="NCBIfam" id="TIGR00163">
    <property type="entry name" value="PS_decarb"/>
    <property type="match status" value="1"/>
</dbReference>
<dbReference type="PANTHER" id="PTHR10067">
    <property type="entry name" value="PHOSPHATIDYLSERINE DECARBOXYLASE"/>
    <property type="match status" value="1"/>
</dbReference>
<dbReference type="PANTHER" id="PTHR10067:SF6">
    <property type="entry name" value="PHOSPHATIDYLSERINE DECARBOXYLASE PROENZYME, MITOCHONDRIAL"/>
    <property type="match status" value="1"/>
</dbReference>
<dbReference type="Pfam" id="PF02666">
    <property type="entry name" value="PS_Dcarbxylase"/>
    <property type="match status" value="1"/>
</dbReference>